<comment type="function">
    <text evidence="1">Required for the assembly of the TOM (translocase of outer membrane) receptor complex, which is responsible for the recognition and translocation of cytosolically synthesized mitochondrial preproteins.</text>
</comment>
<comment type="subcellular location">
    <subcellularLocation>
        <location evidence="1">Mitochondrion outer membrane</location>
    </subcellularLocation>
</comment>
<comment type="similarity">
    <text evidence="3">Belongs to the MIM1 family.</text>
</comment>
<proteinExistence type="inferred from homology"/>
<sequence>MSAEEISNPLAESGVTISSDSEQYSAPESASPQSPSSSSPAVVLYQPPTVWSLFRSAVINLFLPFVNGMMLGFGELFAHEAAFRLGWSNTKVFPVSRRDARPIGPGVEVVERPRRRVDLDDHLDELTSLE</sequence>
<gene>
    <name type="ORF">B13O8.080</name>
    <name type="ORF">NCU01101</name>
</gene>
<keyword id="KW-0472">Membrane</keyword>
<keyword id="KW-0496">Mitochondrion</keyword>
<keyword id="KW-1000">Mitochondrion outer membrane</keyword>
<keyword id="KW-0653">Protein transport</keyword>
<keyword id="KW-1185">Reference proteome</keyword>
<keyword id="KW-0813">Transport</keyword>
<dbReference type="EMBL" id="AL670008">
    <property type="protein sequence ID" value="CAD21341.1"/>
    <property type="molecule type" value="Genomic_DNA"/>
</dbReference>
<dbReference type="EMBL" id="CM002240">
    <property type="protein sequence ID" value="EAA32477.1"/>
    <property type="molecule type" value="Genomic_DNA"/>
</dbReference>
<dbReference type="STRING" id="367110.Q8X0G8"/>
<dbReference type="PaxDb" id="5141-EFNCRP00000004279"/>
<dbReference type="EnsemblFungi" id="EAA32477">
    <property type="protein sequence ID" value="EAA32477"/>
    <property type="gene ID" value="NCU01101"/>
</dbReference>
<dbReference type="KEGG" id="ncr:NCU01101"/>
<dbReference type="VEuPathDB" id="FungiDB:NCU01101"/>
<dbReference type="HOGENOM" id="CLU_127808_0_0_1"/>
<dbReference type="InParanoid" id="Q8X0G8"/>
<dbReference type="OMA" id="KPPTFWG"/>
<dbReference type="OrthoDB" id="5529571at2759"/>
<dbReference type="Proteomes" id="UP000001805">
    <property type="component" value="Chromosome 2, Linkage Group V"/>
</dbReference>
<dbReference type="GO" id="GO:0005741">
    <property type="term" value="C:mitochondrial outer membrane"/>
    <property type="evidence" value="ECO:0000318"/>
    <property type="project" value="GO_Central"/>
</dbReference>
<dbReference type="GO" id="GO:0070096">
    <property type="term" value="P:mitochondrial outer membrane translocase complex assembly"/>
    <property type="evidence" value="ECO:0000318"/>
    <property type="project" value="GO_Central"/>
</dbReference>
<dbReference type="GO" id="GO:0045040">
    <property type="term" value="P:protein insertion into mitochondrial outer membrane"/>
    <property type="evidence" value="ECO:0000318"/>
    <property type="project" value="GO_Central"/>
</dbReference>
<dbReference type="InterPro" id="IPR013262">
    <property type="entry name" value="OMP_MIM1/TOM13_mt"/>
</dbReference>
<dbReference type="PANTHER" id="PTHR28241">
    <property type="entry name" value="MITOCHONDRIAL IMPORT PROTEIN 1"/>
    <property type="match status" value="1"/>
</dbReference>
<dbReference type="PANTHER" id="PTHR28241:SF1">
    <property type="entry name" value="MITOCHONDRIAL IMPORT PROTEIN 1"/>
    <property type="match status" value="1"/>
</dbReference>
<dbReference type="Pfam" id="PF08219">
    <property type="entry name" value="TOM13"/>
    <property type="match status" value="1"/>
</dbReference>
<protein>
    <recommendedName>
        <fullName>Mitochondrial import protein 1</fullName>
    </recommendedName>
</protein>
<evidence type="ECO:0000250" key="1"/>
<evidence type="ECO:0000256" key="2">
    <source>
        <dbReference type="SAM" id="MobiDB-lite"/>
    </source>
</evidence>
<evidence type="ECO:0000305" key="3"/>
<name>MIM1_NEUCR</name>
<organism>
    <name type="scientific">Neurospora crassa (strain ATCC 24698 / 74-OR23-1A / CBS 708.71 / DSM 1257 / FGSC 987)</name>
    <dbReference type="NCBI Taxonomy" id="367110"/>
    <lineage>
        <taxon>Eukaryota</taxon>
        <taxon>Fungi</taxon>
        <taxon>Dikarya</taxon>
        <taxon>Ascomycota</taxon>
        <taxon>Pezizomycotina</taxon>
        <taxon>Sordariomycetes</taxon>
        <taxon>Sordariomycetidae</taxon>
        <taxon>Sordariales</taxon>
        <taxon>Sordariaceae</taxon>
        <taxon>Neurospora</taxon>
    </lineage>
</organism>
<feature type="chain" id="PRO_0000218765" description="Mitochondrial import protein 1">
    <location>
        <begin position="1"/>
        <end position="130"/>
    </location>
</feature>
<feature type="region of interest" description="Disordered" evidence="2">
    <location>
        <begin position="1"/>
        <end position="41"/>
    </location>
</feature>
<feature type="compositionally biased region" description="Polar residues" evidence="2">
    <location>
        <begin position="15"/>
        <end position="24"/>
    </location>
</feature>
<feature type="compositionally biased region" description="Low complexity" evidence="2">
    <location>
        <begin position="25"/>
        <end position="41"/>
    </location>
</feature>
<accession>Q8X0G8</accession>
<reference key="1">
    <citation type="journal article" date="2003" name="Nucleic Acids Res.">
        <title>What's in the genome of a filamentous fungus? Analysis of the Neurospora genome sequence.</title>
        <authorList>
            <person name="Mannhaupt G."/>
            <person name="Montrone C."/>
            <person name="Haase D."/>
            <person name="Mewes H.-W."/>
            <person name="Aign V."/>
            <person name="Hoheisel J.D."/>
            <person name="Fartmann B."/>
            <person name="Nyakatura G."/>
            <person name="Kempken F."/>
            <person name="Maier J."/>
            <person name="Schulte U."/>
        </authorList>
    </citation>
    <scope>NUCLEOTIDE SEQUENCE [LARGE SCALE GENOMIC DNA]</scope>
    <source>
        <strain>ATCC 24698 / 74-OR23-1A / CBS 708.71 / DSM 1257 / FGSC 987</strain>
    </source>
</reference>
<reference key="2">
    <citation type="journal article" date="2003" name="Nature">
        <title>The genome sequence of the filamentous fungus Neurospora crassa.</title>
        <authorList>
            <person name="Galagan J.E."/>
            <person name="Calvo S.E."/>
            <person name="Borkovich K.A."/>
            <person name="Selker E.U."/>
            <person name="Read N.D."/>
            <person name="Jaffe D.B."/>
            <person name="FitzHugh W."/>
            <person name="Ma L.-J."/>
            <person name="Smirnov S."/>
            <person name="Purcell S."/>
            <person name="Rehman B."/>
            <person name="Elkins T."/>
            <person name="Engels R."/>
            <person name="Wang S."/>
            <person name="Nielsen C.B."/>
            <person name="Butler J."/>
            <person name="Endrizzi M."/>
            <person name="Qui D."/>
            <person name="Ianakiev P."/>
            <person name="Bell-Pedersen D."/>
            <person name="Nelson M.A."/>
            <person name="Werner-Washburne M."/>
            <person name="Selitrennikoff C.P."/>
            <person name="Kinsey J.A."/>
            <person name="Braun E.L."/>
            <person name="Zelter A."/>
            <person name="Schulte U."/>
            <person name="Kothe G.O."/>
            <person name="Jedd G."/>
            <person name="Mewes H.-W."/>
            <person name="Staben C."/>
            <person name="Marcotte E."/>
            <person name="Greenberg D."/>
            <person name="Roy A."/>
            <person name="Foley K."/>
            <person name="Naylor J."/>
            <person name="Stange-Thomann N."/>
            <person name="Barrett R."/>
            <person name="Gnerre S."/>
            <person name="Kamal M."/>
            <person name="Kamvysselis M."/>
            <person name="Mauceli E.W."/>
            <person name="Bielke C."/>
            <person name="Rudd S."/>
            <person name="Frishman D."/>
            <person name="Krystofova S."/>
            <person name="Rasmussen C."/>
            <person name="Metzenberg R.L."/>
            <person name="Perkins D.D."/>
            <person name="Kroken S."/>
            <person name="Cogoni C."/>
            <person name="Macino G."/>
            <person name="Catcheside D.E.A."/>
            <person name="Li W."/>
            <person name="Pratt R.J."/>
            <person name="Osmani S.A."/>
            <person name="DeSouza C.P.C."/>
            <person name="Glass N.L."/>
            <person name="Orbach M.J."/>
            <person name="Berglund J.A."/>
            <person name="Voelker R."/>
            <person name="Yarden O."/>
            <person name="Plamann M."/>
            <person name="Seiler S."/>
            <person name="Dunlap J.C."/>
            <person name="Radford A."/>
            <person name="Aramayo R."/>
            <person name="Natvig D.O."/>
            <person name="Alex L.A."/>
            <person name="Mannhaupt G."/>
            <person name="Ebbole D.J."/>
            <person name="Freitag M."/>
            <person name="Paulsen I."/>
            <person name="Sachs M.S."/>
            <person name="Lander E.S."/>
            <person name="Nusbaum C."/>
            <person name="Birren B.W."/>
        </authorList>
    </citation>
    <scope>NUCLEOTIDE SEQUENCE [LARGE SCALE GENOMIC DNA]</scope>
    <source>
        <strain>ATCC 24698 / 74-OR23-1A / CBS 708.71 / DSM 1257 / FGSC 987</strain>
    </source>
</reference>